<feature type="chain" id="PRO_1000001689" description="UPF0758 protein Sama_0327">
    <location>
        <begin position="1"/>
        <end position="225"/>
    </location>
</feature>
<feature type="domain" description="MPN" evidence="1">
    <location>
        <begin position="102"/>
        <end position="224"/>
    </location>
</feature>
<feature type="short sequence motif" description="JAMM motif" evidence="1">
    <location>
        <begin position="173"/>
        <end position="186"/>
    </location>
</feature>
<feature type="binding site" evidence="1">
    <location>
        <position position="173"/>
    </location>
    <ligand>
        <name>Zn(2+)</name>
        <dbReference type="ChEBI" id="CHEBI:29105"/>
        <note>catalytic</note>
    </ligand>
</feature>
<feature type="binding site" evidence="1">
    <location>
        <position position="175"/>
    </location>
    <ligand>
        <name>Zn(2+)</name>
        <dbReference type="ChEBI" id="CHEBI:29105"/>
        <note>catalytic</note>
    </ligand>
</feature>
<feature type="binding site" evidence="1">
    <location>
        <position position="186"/>
    </location>
    <ligand>
        <name>Zn(2+)</name>
        <dbReference type="ChEBI" id="CHEBI:29105"/>
        <note>catalytic</note>
    </ligand>
</feature>
<reference key="1">
    <citation type="submission" date="2006-12" db="EMBL/GenBank/DDBJ databases">
        <title>Complete sequence of Shewanella amazonensis SB2B.</title>
        <authorList>
            <consortium name="US DOE Joint Genome Institute"/>
            <person name="Copeland A."/>
            <person name="Lucas S."/>
            <person name="Lapidus A."/>
            <person name="Barry K."/>
            <person name="Detter J.C."/>
            <person name="Glavina del Rio T."/>
            <person name="Hammon N."/>
            <person name="Israni S."/>
            <person name="Dalin E."/>
            <person name="Tice H."/>
            <person name="Pitluck S."/>
            <person name="Munk A.C."/>
            <person name="Brettin T."/>
            <person name="Bruce D."/>
            <person name="Han C."/>
            <person name="Tapia R."/>
            <person name="Gilna P."/>
            <person name="Schmutz J."/>
            <person name="Larimer F."/>
            <person name="Land M."/>
            <person name="Hauser L."/>
            <person name="Kyrpides N."/>
            <person name="Mikhailova N."/>
            <person name="Fredrickson J."/>
            <person name="Richardson P."/>
        </authorList>
    </citation>
    <scope>NUCLEOTIDE SEQUENCE [LARGE SCALE GENOMIC DNA]</scope>
    <source>
        <strain>ATCC BAA-1098 / SB2B</strain>
    </source>
</reference>
<dbReference type="EMBL" id="CP000507">
    <property type="protein sequence ID" value="ABL98538.1"/>
    <property type="molecule type" value="Genomic_DNA"/>
</dbReference>
<dbReference type="RefSeq" id="WP_011758448.1">
    <property type="nucleotide sequence ID" value="NC_008700.1"/>
</dbReference>
<dbReference type="SMR" id="A1S2D2"/>
<dbReference type="STRING" id="326297.Sama_0327"/>
<dbReference type="KEGG" id="saz:Sama_0327"/>
<dbReference type="eggNOG" id="COG2003">
    <property type="taxonomic scope" value="Bacteria"/>
</dbReference>
<dbReference type="HOGENOM" id="CLU_073529_0_1_6"/>
<dbReference type="OrthoDB" id="9804482at2"/>
<dbReference type="Proteomes" id="UP000009175">
    <property type="component" value="Chromosome"/>
</dbReference>
<dbReference type="GO" id="GO:0046872">
    <property type="term" value="F:metal ion binding"/>
    <property type="evidence" value="ECO:0007669"/>
    <property type="project" value="UniProtKB-KW"/>
</dbReference>
<dbReference type="GO" id="GO:0008237">
    <property type="term" value="F:metallopeptidase activity"/>
    <property type="evidence" value="ECO:0007669"/>
    <property type="project" value="UniProtKB-KW"/>
</dbReference>
<dbReference type="GO" id="GO:0006508">
    <property type="term" value="P:proteolysis"/>
    <property type="evidence" value="ECO:0007669"/>
    <property type="project" value="UniProtKB-KW"/>
</dbReference>
<dbReference type="CDD" id="cd08071">
    <property type="entry name" value="MPN_DUF2466"/>
    <property type="match status" value="1"/>
</dbReference>
<dbReference type="FunFam" id="3.40.140.10:FF:000032">
    <property type="entry name" value="DNA repair protein RadC"/>
    <property type="match status" value="1"/>
</dbReference>
<dbReference type="Gene3D" id="3.40.140.10">
    <property type="entry name" value="Cytidine Deaminase, domain 2"/>
    <property type="match status" value="1"/>
</dbReference>
<dbReference type="InterPro" id="IPR037518">
    <property type="entry name" value="MPN"/>
</dbReference>
<dbReference type="InterPro" id="IPR025657">
    <property type="entry name" value="RadC_JAB"/>
</dbReference>
<dbReference type="InterPro" id="IPR010994">
    <property type="entry name" value="RuvA_2-like"/>
</dbReference>
<dbReference type="InterPro" id="IPR001405">
    <property type="entry name" value="UPF0758"/>
</dbReference>
<dbReference type="InterPro" id="IPR020891">
    <property type="entry name" value="UPF0758_CS"/>
</dbReference>
<dbReference type="InterPro" id="IPR046778">
    <property type="entry name" value="UPF0758_N"/>
</dbReference>
<dbReference type="NCBIfam" id="NF000642">
    <property type="entry name" value="PRK00024.1"/>
    <property type="match status" value="1"/>
</dbReference>
<dbReference type="NCBIfam" id="TIGR00608">
    <property type="entry name" value="radc"/>
    <property type="match status" value="1"/>
</dbReference>
<dbReference type="PANTHER" id="PTHR30471">
    <property type="entry name" value="DNA REPAIR PROTEIN RADC"/>
    <property type="match status" value="1"/>
</dbReference>
<dbReference type="PANTHER" id="PTHR30471:SF3">
    <property type="entry name" value="UPF0758 PROTEIN YEES-RELATED"/>
    <property type="match status" value="1"/>
</dbReference>
<dbReference type="Pfam" id="PF04002">
    <property type="entry name" value="RadC"/>
    <property type="match status" value="1"/>
</dbReference>
<dbReference type="Pfam" id="PF20582">
    <property type="entry name" value="UPF0758_N"/>
    <property type="match status" value="1"/>
</dbReference>
<dbReference type="SUPFAM" id="SSF102712">
    <property type="entry name" value="JAB1/MPN domain"/>
    <property type="match status" value="1"/>
</dbReference>
<dbReference type="SUPFAM" id="SSF47781">
    <property type="entry name" value="RuvA domain 2-like"/>
    <property type="match status" value="1"/>
</dbReference>
<dbReference type="PROSITE" id="PS50249">
    <property type="entry name" value="MPN"/>
    <property type="match status" value="1"/>
</dbReference>
<dbReference type="PROSITE" id="PS01302">
    <property type="entry name" value="UPF0758"/>
    <property type="match status" value="1"/>
</dbReference>
<protein>
    <recommendedName>
        <fullName>UPF0758 protein Sama_0327</fullName>
    </recommendedName>
</protein>
<evidence type="ECO:0000255" key="1">
    <source>
        <dbReference type="PROSITE-ProRule" id="PRU01182"/>
    </source>
</evidence>
<evidence type="ECO:0000305" key="2"/>
<proteinExistence type="inferred from homology"/>
<accession>A1S2D2</accession>
<comment type="similarity">
    <text evidence="2">Belongs to the UPF0758 family.</text>
</comment>
<keyword id="KW-0378">Hydrolase</keyword>
<keyword id="KW-0479">Metal-binding</keyword>
<keyword id="KW-0482">Metalloprotease</keyword>
<keyword id="KW-0645">Protease</keyword>
<keyword id="KW-1185">Reference proteome</keyword>
<keyword id="KW-0862">Zinc</keyword>
<name>Y327_SHEAM</name>
<organism>
    <name type="scientific">Shewanella amazonensis (strain ATCC BAA-1098 / SB2B)</name>
    <dbReference type="NCBI Taxonomy" id="326297"/>
    <lineage>
        <taxon>Bacteria</taxon>
        <taxon>Pseudomonadati</taxon>
        <taxon>Pseudomonadota</taxon>
        <taxon>Gammaproteobacteria</taxon>
        <taxon>Alteromonadales</taxon>
        <taxon>Shewanellaceae</taxon>
        <taxon>Shewanella</taxon>
    </lineage>
</organism>
<gene>
    <name type="ordered locus">Sama_0327</name>
</gene>
<sequence>MAIRDWPEGEGPREKLLQRGAAHLSDAELLAVLLRNGVSGQNAVDLARELIGEFGGLRPLFSATKQQVCRLQGLGPVKYAQLQASAELARRLAGESLQRGAVLTSPDLTRDYLRFQLADRAYEVFAVLLLDSQHRVIQFVELFRGTIDAASVYPRELVSLVLEKRAAAVIVCHNHPSGVAEPSQADRRITERLKNALATIDVSLLDHMVVGDREIVSFAERGWIG</sequence>